<name>RS6_CAMJR</name>
<gene>
    <name evidence="1" type="primary">rpsF</name>
    <name type="ordered locus">CJE1213</name>
</gene>
<organism>
    <name type="scientific">Campylobacter jejuni (strain RM1221)</name>
    <dbReference type="NCBI Taxonomy" id="195099"/>
    <lineage>
        <taxon>Bacteria</taxon>
        <taxon>Pseudomonadati</taxon>
        <taxon>Campylobacterota</taxon>
        <taxon>Epsilonproteobacteria</taxon>
        <taxon>Campylobacterales</taxon>
        <taxon>Campylobacteraceae</taxon>
        <taxon>Campylobacter</taxon>
    </lineage>
</organism>
<dbReference type="EMBL" id="CP000025">
    <property type="protein sequence ID" value="AAW35535.1"/>
    <property type="molecule type" value="Genomic_DNA"/>
</dbReference>
<dbReference type="RefSeq" id="WP_002853062.1">
    <property type="nucleotide sequence ID" value="NC_003912.7"/>
</dbReference>
<dbReference type="SMR" id="Q5HU34"/>
<dbReference type="KEGG" id="cjr:CJE1213"/>
<dbReference type="HOGENOM" id="CLU_113441_4_1_7"/>
<dbReference type="GO" id="GO:0022627">
    <property type="term" value="C:cytosolic small ribosomal subunit"/>
    <property type="evidence" value="ECO:0007669"/>
    <property type="project" value="TreeGrafter"/>
</dbReference>
<dbReference type="GO" id="GO:0070181">
    <property type="term" value="F:small ribosomal subunit rRNA binding"/>
    <property type="evidence" value="ECO:0007669"/>
    <property type="project" value="TreeGrafter"/>
</dbReference>
<dbReference type="GO" id="GO:0003735">
    <property type="term" value="F:structural constituent of ribosome"/>
    <property type="evidence" value="ECO:0007669"/>
    <property type="project" value="InterPro"/>
</dbReference>
<dbReference type="GO" id="GO:0006412">
    <property type="term" value="P:translation"/>
    <property type="evidence" value="ECO:0007669"/>
    <property type="project" value="UniProtKB-UniRule"/>
</dbReference>
<dbReference type="CDD" id="cd00473">
    <property type="entry name" value="bS6"/>
    <property type="match status" value="1"/>
</dbReference>
<dbReference type="FunFam" id="3.30.70.60:FF:000010">
    <property type="entry name" value="30S ribosomal protein S6"/>
    <property type="match status" value="1"/>
</dbReference>
<dbReference type="Gene3D" id="3.30.70.60">
    <property type="match status" value="1"/>
</dbReference>
<dbReference type="HAMAP" id="MF_00360">
    <property type="entry name" value="Ribosomal_bS6"/>
    <property type="match status" value="1"/>
</dbReference>
<dbReference type="InterPro" id="IPR000529">
    <property type="entry name" value="Ribosomal_bS6"/>
</dbReference>
<dbReference type="InterPro" id="IPR035980">
    <property type="entry name" value="Ribosomal_bS6_sf"/>
</dbReference>
<dbReference type="InterPro" id="IPR020814">
    <property type="entry name" value="Ribosomal_S6_plastid/chlpt"/>
</dbReference>
<dbReference type="InterPro" id="IPR014717">
    <property type="entry name" value="Transl_elong_EF1B/ribsomal_bS6"/>
</dbReference>
<dbReference type="NCBIfam" id="TIGR00166">
    <property type="entry name" value="S6"/>
    <property type="match status" value="1"/>
</dbReference>
<dbReference type="PANTHER" id="PTHR21011">
    <property type="entry name" value="MITOCHONDRIAL 28S RIBOSOMAL PROTEIN S6"/>
    <property type="match status" value="1"/>
</dbReference>
<dbReference type="PANTHER" id="PTHR21011:SF1">
    <property type="entry name" value="SMALL RIBOSOMAL SUBUNIT PROTEIN BS6M"/>
    <property type="match status" value="1"/>
</dbReference>
<dbReference type="Pfam" id="PF01250">
    <property type="entry name" value="Ribosomal_S6"/>
    <property type="match status" value="1"/>
</dbReference>
<dbReference type="SUPFAM" id="SSF54995">
    <property type="entry name" value="Ribosomal protein S6"/>
    <property type="match status" value="1"/>
</dbReference>
<protein>
    <recommendedName>
        <fullName evidence="1">Small ribosomal subunit protein bS6</fullName>
    </recommendedName>
    <alternativeName>
        <fullName evidence="2">30S ribosomal protein S6</fullName>
    </alternativeName>
</protein>
<evidence type="ECO:0000255" key="1">
    <source>
        <dbReference type="HAMAP-Rule" id="MF_00360"/>
    </source>
</evidence>
<evidence type="ECO:0000305" key="2"/>
<comment type="function">
    <text evidence="1">Binds together with bS18 to 16S ribosomal RNA.</text>
</comment>
<comment type="similarity">
    <text evidence="1">Belongs to the bacterial ribosomal protein bS6 family.</text>
</comment>
<feature type="chain" id="PRO_0000176746" description="Small ribosomal subunit protein bS6">
    <location>
        <begin position="1"/>
        <end position="125"/>
    </location>
</feature>
<sequence>MKHYEVLFILKPTLTEEEVNAKLEFVKEVLTKNSAEIETVVPMGTRKLAYKIKKYERGTYFVIYFKAPTNLIAELERVLRITEEVIRFLIVKYENKKEIAAWEKLSHGIKQSKKEIKPLDAPEIQ</sequence>
<reference key="1">
    <citation type="journal article" date="2005" name="PLoS Biol.">
        <title>Major structural differences and novel potential virulence mechanisms from the genomes of multiple Campylobacter species.</title>
        <authorList>
            <person name="Fouts D.E."/>
            <person name="Mongodin E.F."/>
            <person name="Mandrell R.E."/>
            <person name="Miller W.G."/>
            <person name="Rasko D.A."/>
            <person name="Ravel J."/>
            <person name="Brinkac L.M."/>
            <person name="DeBoy R.T."/>
            <person name="Parker C.T."/>
            <person name="Daugherty S.C."/>
            <person name="Dodson R.J."/>
            <person name="Durkin A.S."/>
            <person name="Madupu R."/>
            <person name="Sullivan S.A."/>
            <person name="Shetty J.U."/>
            <person name="Ayodeji M.A."/>
            <person name="Shvartsbeyn A."/>
            <person name="Schatz M.C."/>
            <person name="Badger J.H."/>
            <person name="Fraser C.M."/>
            <person name="Nelson K.E."/>
        </authorList>
    </citation>
    <scope>NUCLEOTIDE SEQUENCE [LARGE SCALE GENOMIC DNA]</scope>
    <source>
        <strain>RM1221</strain>
    </source>
</reference>
<keyword id="KW-0687">Ribonucleoprotein</keyword>
<keyword id="KW-0689">Ribosomal protein</keyword>
<keyword id="KW-0694">RNA-binding</keyword>
<keyword id="KW-0699">rRNA-binding</keyword>
<proteinExistence type="inferred from homology"/>
<accession>Q5HU34</accession>